<accession>B0TL90</accession>
<reference key="1">
    <citation type="submission" date="2008-01" db="EMBL/GenBank/DDBJ databases">
        <title>Complete sequence of Shewanella halifaxensis HAW-EB4.</title>
        <authorList>
            <consortium name="US DOE Joint Genome Institute"/>
            <person name="Copeland A."/>
            <person name="Lucas S."/>
            <person name="Lapidus A."/>
            <person name="Glavina del Rio T."/>
            <person name="Dalin E."/>
            <person name="Tice H."/>
            <person name="Bruce D."/>
            <person name="Goodwin L."/>
            <person name="Pitluck S."/>
            <person name="Sims D."/>
            <person name="Brettin T."/>
            <person name="Detter J.C."/>
            <person name="Han C."/>
            <person name="Kuske C.R."/>
            <person name="Schmutz J."/>
            <person name="Larimer F."/>
            <person name="Land M."/>
            <person name="Hauser L."/>
            <person name="Kyrpides N."/>
            <person name="Kim E."/>
            <person name="Zhao J.-S."/>
            <person name="Richardson P."/>
        </authorList>
    </citation>
    <scope>NUCLEOTIDE SEQUENCE [LARGE SCALE GENOMIC DNA]</scope>
    <source>
        <strain>HAW-EB4</strain>
    </source>
</reference>
<name>CAPP_SHEHH</name>
<evidence type="ECO:0000255" key="1">
    <source>
        <dbReference type="HAMAP-Rule" id="MF_00595"/>
    </source>
</evidence>
<gene>
    <name evidence="1" type="primary">ppc</name>
    <name type="ordered locus">Shal_4095</name>
</gene>
<proteinExistence type="inferred from homology"/>
<feature type="chain" id="PRO_1000082434" description="Phosphoenolpyruvate carboxylase">
    <location>
        <begin position="1"/>
        <end position="878"/>
    </location>
</feature>
<feature type="active site" evidence="1">
    <location>
        <position position="138"/>
    </location>
</feature>
<feature type="active site" evidence="1">
    <location>
        <position position="545"/>
    </location>
</feature>
<keyword id="KW-0120">Carbon dioxide fixation</keyword>
<keyword id="KW-0456">Lyase</keyword>
<keyword id="KW-0460">Magnesium</keyword>
<comment type="function">
    <text evidence="1">Forms oxaloacetate, a four-carbon dicarboxylic acid source for the tricarboxylic acid cycle.</text>
</comment>
<comment type="catalytic activity">
    <reaction evidence="1">
        <text>oxaloacetate + phosphate = phosphoenolpyruvate + hydrogencarbonate</text>
        <dbReference type="Rhea" id="RHEA:28370"/>
        <dbReference type="ChEBI" id="CHEBI:16452"/>
        <dbReference type="ChEBI" id="CHEBI:17544"/>
        <dbReference type="ChEBI" id="CHEBI:43474"/>
        <dbReference type="ChEBI" id="CHEBI:58702"/>
        <dbReference type="EC" id="4.1.1.31"/>
    </reaction>
</comment>
<comment type="cofactor">
    <cofactor evidence="1">
        <name>Mg(2+)</name>
        <dbReference type="ChEBI" id="CHEBI:18420"/>
    </cofactor>
</comment>
<comment type="similarity">
    <text evidence="1">Belongs to the PEPCase type 1 family.</text>
</comment>
<protein>
    <recommendedName>
        <fullName evidence="1">Phosphoenolpyruvate carboxylase</fullName>
        <shortName evidence="1">PEPC</shortName>
        <shortName evidence="1">PEPCase</shortName>
        <ecNumber evidence="1">4.1.1.31</ecNumber>
    </recommendedName>
</protein>
<dbReference type="EC" id="4.1.1.31" evidence="1"/>
<dbReference type="EMBL" id="CP000931">
    <property type="protein sequence ID" value="ABZ78635.1"/>
    <property type="molecule type" value="Genomic_DNA"/>
</dbReference>
<dbReference type="RefSeq" id="WP_012279152.1">
    <property type="nucleotide sequence ID" value="NC_010334.1"/>
</dbReference>
<dbReference type="SMR" id="B0TL90"/>
<dbReference type="STRING" id="458817.Shal_4095"/>
<dbReference type="KEGG" id="shl:Shal_4095"/>
<dbReference type="eggNOG" id="COG2352">
    <property type="taxonomic scope" value="Bacteria"/>
</dbReference>
<dbReference type="HOGENOM" id="CLU_006557_2_0_6"/>
<dbReference type="OrthoDB" id="9768133at2"/>
<dbReference type="Proteomes" id="UP000001317">
    <property type="component" value="Chromosome"/>
</dbReference>
<dbReference type="GO" id="GO:0005829">
    <property type="term" value="C:cytosol"/>
    <property type="evidence" value="ECO:0007669"/>
    <property type="project" value="TreeGrafter"/>
</dbReference>
<dbReference type="GO" id="GO:0000287">
    <property type="term" value="F:magnesium ion binding"/>
    <property type="evidence" value="ECO:0007669"/>
    <property type="project" value="UniProtKB-UniRule"/>
</dbReference>
<dbReference type="GO" id="GO:0008964">
    <property type="term" value="F:phosphoenolpyruvate carboxylase activity"/>
    <property type="evidence" value="ECO:0007669"/>
    <property type="project" value="UniProtKB-UniRule"/>
</dbReference>
<dbReference type="GO" id="GO:0015977">
    <property type="term" value="P:carbon fixation"/>
    <property type="evidence" value="ECO:0007669"/>
    <property type="project" value="UniProtKB-UniRule"/>
</dbReference>
<dbReference type="GO" id="GO:0006107">
    <property type="term" value="P:oxaloacetate metabolic process"/>
    <property type="evidence" value="ECO:0007669"/>
    <property type="project" value="UniProtKB-UniRule"/>
</dbReference>
<dbReference type="GO" id="GO:0006099">
    <property type="term" value="P:tricarboxylic acid cycle"/>
    <property type="evidence" value="ECO:0007669"/>
    <property type="project" value="InterPro"/>
</dbReference>
<dbReference type="Gene3D" id="1.20.1440.90">
    <property type="entry name" value="Phosphoenolpyruvate/pyruvate domain"/>
    <property type="match status" value="1"/>
</dbReference>
<dbReference type="HAMAP" id="MF_00595">
    <property type="entry name" value="PEPcase_type1"/>
    <property type="match status" value="1"/>
</dbReference>
<dbReference type="InterPro" id="IPR021135">
    <property type="entry name" value="PEP_COase"/>
</dbReference>
<dbReference type="InterPro" id="IPR022805">
    <property type="entry name" value="PEP_COase_bac/pln-type"/>
</dbReference>
<dbReference type="InterPro" id="IPR018129">
    <property type="entry name" value="PEP_COase_Lys_AS"/>
</dbReference>
<dbReference type="InterPro" id="IPR033129">
    <property type="entry name" value="PEPCASE_His_AS"/>
</dbReference>
<dbReference type="InterPro" id="IPR015813">
    <property type="entry name" value="Pyrv/PenolPyrv_kinase-like_dom"/>
</dbReference>
<dbReference type="NCBIfam" id="NF000584">
    <property type="entry name" value="PRK00009.1"/>
    <property type="match status" value="1"/>
</dbReference>
<dbReference type="PANTHER" id="PTHR30523">
    <property type="entry name" value="PHOSPHOENOLPYRUVATE CARBOXYLASE"/>
    <property type="match status" value="1"/>
</dbReference>
<dbReference type="PANTHER" id="PTHR30523:SF6">
    <property type="entry name" value="PHOSPHOENOLPYRUVATE CARBOXYLASE"/>
    <property type="match status" value="1"/>
</dbReference>
<dbReference type="Pfam" id="PF00311">
    <property type="entry name" value="PEPcase"/>
    <property type="match status" value="1"/>
</dbReference>
<dbReference type="PRINTS" id="PR00150">
    <property type="entry name" value="PEPCARBXLASE"/>
</dbReference>
<dbReference type="SUPFAM" id="SSF51621">
    <property type="entry name" value="Phosphoenolpyruvate/pyruvate domain"/>
    <property type="match status" value="1"/>
</dbReference>
<dbReference type="PROSITE" id="PS00781">
    <property type="entry name" value="PEPCASE_1"/>
    <property type="match status" value="1"/>
</dbReference>
<dbReference type="PROSITE" id="PS00393">
    <property type="entry name" value="PEPCASE_2"/>
    <property type="match status" value="1"/>
</dbReference>
<organism>
    <name type="scientific">Shewanella halifaxensis (strain HAW-EB4)</name>
    <dbReference type="NCBI Taxonomy" id="458817"/>
    <lineage>
        <taxon>Bacteria</taxon>
        <taxon>Pseudomonadati</taxon>
        <taxon>Pseudomonadota</taxon>
        <taxon>Gammaproteobacteria</taxon>
        <taxon>Alteromonadales</taxon>
        <taxon>Shewanellaceae</taxon>
        <taxon>Shewanella</taxon>
    </lineage>
</organism>
<sequence length="878" mass="98771">MVDMYASLRSNVGTLGQILGDTIRTDLDDTFLDKIEQIRHLAKSSRQGDSAARKEMLTLLSSLSDDELVPFAKAFNQFLNLANIAEQFHTISRNCDELVCVPDPVEQLLGRMLGGNIDQEKVLACLKTLDIDLVLTAHPTEISRRTLIQKYSAVIDSLTAQENTQLTEQEKKQHHLRLRQLIAQIWHTNEIRNERPTPVDEARWGLCTIEASLWQAVPDFLRQLNQQVEERTNTQLPTDIAPVRFSSWMGGDRDGNPFVTSAVTQEVLDRNRHTAARLYLKDVVLLVNELSMEGANEALLAYTNNSNEPYRDVLRTLRQKLRNTIDYLNGRLEGQHPDVDPSEIIWHESDLKDPLMMLYQSLCDRGMSLIANGLLLDMLRRIACFGIHMLRLDVRQDADRHADVIAELTRYLGMGDYAHWDETEKQSFLLRELSSKRPLIPANWQASPEVEEVVKTCRLVATQPARAMGSYVISMASQPSDVLAVLLLLKETGCPHPMRVVPLFETLDDLNNASACMSALFSIDWYRGYTKGIQEVMIGYSDSAKDAGVMAAAWAQYTAQEKLVAISQEANIKLTLFHGRGGTIGRGGGPAHEAILSQPPGSVDGRIRVTEQGEMIRFKFGLPKLAVQSLALYTSAVMEATLLPPPEPKPEWRQCMQQLAEESVLAYRAIVREEPDFVSYFRAATPEIELGKLPLGSRPAKRRVDGGIESLRAIPWIFAWSQNRLMLPAWLGAGEALKAASERGDLPLLQEMEKHWPFFKTRISMLEMVYAKAEPNLSKFYETSLVPKELHHLGVQLRERLAIGIEAVLELTQAESLMAHTPWNRESVELRNPYIDPLNFLQAELLARTRREEQSSKNVELALMLTIAGVAAGMRNTG</sequence>